<evidence type="ECO:0000255" key="1">
    <source>
        <dbReference type="HAMAP-Rule" id="MF_01241"/>
    </source>
</evidence>
<reference key="1">
    <citation type="journal article" date="2008" name="J. Bacteriol.">
        <title>Genome sequence of Lactobacillus helveticus: an organism distinguished by selective gene loss and IS element expansion.</title>
        <authorList>
            <person name="Callanan M."/>
            <person name="Kaleta P."/>
            <person name="O'Callaghan J."/>
            <person name="O'Sullivan O."/>
            <person name="Jordan K."/>
            <person name="McAuliffe O."/>
            <person name="Sangrador-Vegas A."/>
            <person name="Slattery L."/>
            <person name="Fitzgerald G.F."/>
            <person name="Beresford T."/>
            <person name="Ross R.P."/>
        </authorList>
    </citation>
    <scope>NUCLEOTIDE SEQUENCE [LARGE SCALE GENOMIC DNA]</scope>
    <source>
        <strain>DPC 4571</strain>
    </source>
</reference>
<organism>
    <name type="scientific">Lactobacillus helveticus (strain DPC 4571)</name>
    <dbReference type="NCBI Taxonomy" id="405566"/>
    <lineage>
        <taxon>Bacteria</taxon>
        <taxon>Bacillati</taxon>
        <taxon>Bacillota</taxon>
        <taxon>Bacilli</taxon>
        <taxon>Lactobacillales</taxon>
        <taxon>Lactobacillaceae</taxon>
        <taxon>Lactobacillus</taxon>
    </lineage>
</organism>
<proteinExistence type="inferred from homology"/>
<comment type="function">
    <text evidence="1">Catalyzes the reversible isomerization-deamination of glucosamine 6-phosphate (GlcN6P) to form fructose 6-phosphate (Fru6P) and ammonium ion.</text>
</comment>
<comment type="catalytic activity">
    <reaction evidence="1">
        <text>alpha-D-glucosamine 6-phosphate + H2O = beta-D-fructose 6-phosphate + NH4(+)</text>
        <dbReference type="Rhea" id="RHEA:12172"/>
        <dbReference type="ChEBI" id="CHEBI:15377"/>
        <dbReference type="ChEBI" id="CHEBI:28938"/>
        <dbReference type="ChEBI" id="CHEBI:57634"/>
        <dbReference type="ChEBI" id="CHEBI:75989"/>
        <dbReference type="EC" id="3.5.99.6"/>
    </reaction>
</comment>
<comment type="pathway">
    <text evidence="1">Amino-sugar metabolism; N-acetylneuraminate degradation; D-fructose 6-phosphate from N-acetylneuraminate: step 5/5.</text>
</comment>
<comment type="similarity">
    <text evidence="1">Belongs to the glucosamine/galactosamine-6-phosphate isomerase family. NagB subfamily.</text>
</comment>
<feature type="chain" id="PRO_1000073172" description="Glucosamine-6-phosphate deaminase">
    <location>
        <begin position="1"/>
        <end position="239"/>
    </location>
</feature>
<feature type="active site" description="Proton acceptor; for enolization step" evidence="1">
    <location>
        <position position="62"/>
    </location>
</feature>
<feature type="active site" description="For ring-opening step" evidence="1">
    <location>
        <position position="128"/>
    </location>
</feature>
<feature type="active site" description="Proton acceptor; for ring-opening step" evidence="1">
    <location>
        <position position="130"/>
    </location>
</feature>
<feature type="active site" description="For ring-opening step" evidence="1">
    <location>
        <position position="135"/>
    </location>
</feature>
<sequence>MKVIVTENKIQGGAKAFEIFKNEIKNGAKVLGLATGSTPETLYQNFINSDLNCSNLISINLDEYVGLTPDNPQSYHYFMRKHLFDKKPFKKSYVPDGMTKDVAATCKEYDQIIKDNPIDVQLLGIGRNGHIAFNEPGTPFDIGTHEVKLTENTIKANSRFFDNEDEVPKSAICMGTANIMDAKKVVLMAFGEKKAQAIKEMIEGPVTEQVPASILQKHPDVTVIVDKAAAQELDDKYKN</sequence>
<accession>A8YTN8</accession>
<gene>
    <name evidence="1" type="primary">nagB</name>
    <name type="ordered locus">lhv_2077</name>
</gene>
<dbReference type="EC" id="3.5.99.6" evidence="1"/>
<dbReference type="EMBL" id="CP000517">
    <property type="protein sequence ID" value="ABX27862.1"/>
    <property type="molecule type" value="Genomic_DNA"/>
</dbReference>
<dbReference type="RefSeq" id="WP_012212395.1">
    <property type="nucleotide sequence ID" value="NC_010080.1"/>
</dbReference>
<dbReference type="SMR" id="A8YTN8"/>
<dbReference type="KEGG" id="lhe:lhv_2077"/>
<dbReference type="eggNOG" id="COG0363">
    <property type="taxonomic scope" value="Bacteria"/>
</dbReference>
<dbReference type="HOGENOM" id="CLU_049611_1_0_9"/>
<dbReference type="UniPathway" id="UPA00629">
    <property type="reaction ID" value="UER00684"/>
</dbReference>
<dbReference type="Proteomes" id="UP000000790">
    <property type="component" value="Chromosome"/>
</dbReference>
<dbReference type="GO" id="GO:0005737">
    <property type="term" value="C:cytoplasm"/>
    <property type="evidence" value="ECO:0007669"/>
    <property type="project" value="TreeGrafter"/>
</dbReference>
<dbReference type="GO" id="GO:0004342">
    <property type="term" value="F:glucosamine-6-phosphate deaminase activity"/>
    <property type="evidence" value="ECO:0007669"/>
    <property type="project" value="UniProtKB-UniRule"/>
</dbReference>
<dbReference type="GO" id="GO:0042802">
    <property type="term" value="F:identical protein binding"/>
    <property type="evidence" value="ECO:0007669"/>
    <property type="project" value="TreeGrafter"/>
</dbReference>
<dbReference type="GO" id="GO:0005975">
    <property type="term" value="P:carbohydrate metabolic process"/>
    <property type="evidence" value="ECO:0007669"/>
    <property type="project" value="InterPro"/>
</dbReference>
<dbReference type="GO" id="GO:0006043">
    <property type="term" value="P:glucosamine catabolic process"/>
    <property type="evidence" value="ECO:0007669"/>
    <property type="project" value="TreeGrafter"/>
</dbReference>
<dbReference type="GO" id="GO:0006046">
    <property type="term" value="P:N-acetylglucosamine catabolic process"/>
    <property type="evidence" value="ECO:0007669"/>
    <property type="project" value="TreeGrafter"/>
</dbReference>
<dbReference type="GO" id="GO:0019262">
    <property type="term" value="P:N-acetylneuraminate catabolic process"/>
    <property type="evidence" value="ECO:0007669"/>
    <property type="project" value="UniProtKB-UniRule"/>
</dbReference>
<dbReference type="CDD" id="cd01399">
    <property type="entry name" value="GlcN6P_deaminase"/>
    <property type="match status" value="1"/>
</dbReference>
<dbReference type="FunFam" id="3.40.50.1360:FF:000003">
    <property type="entry name" value="Glucosamine-6-phosphate deaminase"/>
    <property type="match status" value="1"/>
</dbReference>
<dbReference type="Gene3D" id="3.40.50.1360">
    <property type="match status" value="1"/>
</dbReference>
<dbReference type="HAMAP" id="MF_01241">
    <property type="entry name" value="GlcN6P_deamin"/>
    <property type="match status" value="1"/>
</dbReference>
<dbReference type="InterPro" id="IPR006148">
    <property type="entry name" value="Glc/Gal-6P_isomerase"/>
</dbReference>
<dbReference type="InterPro" id="IPR004547">
    <property type="entry name" value="Glucosamine6P_isomerase"/>
</dbReference>
<dbReference type="InterPro" id="IPR018321">
    <property type="entry name" value="Glucosamine6P_isomerase_CS"/>
</dbReference>
<dbReference type="InterPro" id="IPR037171">
    <property type="entry name" value="NagB/RpiA_transferase-like"/>
</dbReference>
<dbReference type="NCBIfam" id="TIGR00502">
    <property type="entry name" value="nagB"/>
    <property type="match status" value="1"/>
</dbReference>
<dbReference type="PANTHER" id="PTHR11280">
    <property type="entry name" value="GLUCOSAMINE-6-PHOSPHATE ISOMERASE"/>
    <property type="match status" value="1"/>
</dbReference>
<dbReference type="PANTHER" id="PTHR11280:SF5">
    <property type="entry name" value="GLUCOSAMINE-6-PHOSPHATE ISOMERASE"/>
    <property type="match status" value="1"/>
</dbReference>
<dbReference type="Pfam" id="PF01182">
    <property type="entry name" value="Glucosamine_iso"/>
    <property type="match status" value="1"/>
</dbReference>
<dbReference type="SUPFAM" id="SSF100950">
    <property type="entry name" value="NagB/RpiA/CoA transferase-like"/>
    <property type="match status" value="1"/>
</dbReference>
<dbReference type="PROSITE" id="PS01161">
    <property type="entry name" value="GLC_GALNAC_ISOMERASE"/>
    <property type="match status" value="1"/>
</dbReference>
<protein>
    <recommendedName>
        <fullName evidence="1">Glucosamine-6-phosphate deaminase</fullName>
        <ecNumber evidence="1">3.5.99.6</ecNumber>
    </recommendedName>
    <alternativeName>
        <fullName evidence="1">GlcN6P deaminase</fullName>
        <shortName evidence="1">GNPDA</shortName>
    </alternativeName>
    <alternativeName>
        <fullName evidence="1">Glucosamine-6-phosphate isomerase</fullName>
    </alternativeName>
</protein>
<name>NAGB_LACH4</name>
<keyword id="KW-0119">Carbohydrate metabolism</keyword>
<keyword id="KW-0378">Hydrolase</keyword>